<dbReference type="EMBL" id="AP008957">
    <property type="protein sequence ID" value="BAH33881.1"/>
    <property type="molecule type" value="Genomic_DNA"/>
</dbReference>
<dbReference type="RefSeq" id="WP_020907809.1">
    <property type="nucleotide sequence ID" value="NC_012490.1"/>
</dbReference>
<dbReference type="SMR" id="C0ZZU6"/>
<dbReference type="MEROPS" id="T01.980"/>
<dbReference type="KEGG" id="rer:RER_31730"/>
<dbReference type="PATRIC" id="fig|234621.6.peg.3679"/>
<dbReference type="eggNOG" id="COG0638">
    <property type="taxonomic scope" value="Bacteria"/>
</dbReference>
<dbReference type="HOGENOM" id="CLU_071031_0_0_11"/>
<dbReference type="UniPathway" id="UPA00997"/>
<dbReference type="Proteomes" id="UP000002204">
    <property type="component" value="Chromosome"/>
</dbReference>
<dbReference type="GO" id="GO:0005737">
    <property type="term" value="C:cytoplasm"/>
    <property type="evidence" value="ECO:0007669"/>
    <property type="project" value="UniProtKB-SubCell"/>
</dbReference>
<dbReference type="GO" id="GO:0019773">
    <property type="term" value="C:proteasome core complex, alpha-subunit complex"/>
    <property type="evidence" value="ECO:0007669"/>
    <property type="project" value="UniProtKB-UniRule"/>
</dbReference>
<dbReference type="GO" id="GO:0004298">
    <property type="term" value="F:threonine-type endopeptidase activity"/>
    <property type="evidence" value="ECO:0007669"/>
    <property type="project" value="InterPro"/>
</dbReference>
<dbReference type="GO" id="GO:0019941">
    <property type="term" value="P:modification-dependent protein catabolic process"/>
    <property type="evidence" value="ECO:0007669"/>
    <property type="project" value="UniProtKB-UniRule"/>
</dbReference>
<dbReference type="GO" id="GO:0010498">
    <property type="term" value="P:proteasomal protein catabolic process"/>
    <property type="evidence" value="ECO:0007669"/>
    <property type="project" value="UniProtKB-UniRule"/>
</dbReference>
<dbReference type="CDD" id="cd01901">
    <property type="entry name" value="Ntn_hydrolase"/>
    <property type="match status" value="1"/>
</dbReference>
<dbReference type="FunFam" id="3.60.20.10:FF:000023">
    <property type="entry name" value="Proteasome subunit alpha"/>
    <property type="match status" value="1"/>
</dbReference>
<dbReference type="Gene3D" id="3.60.20.10">
    <property type="entry name" value="Glutamine Phosphoribosylpyrophosphate, subunit 1, domain 1"/>
    <property type="match status" value="1"/>
</dbReference>
<dbReference type="HAMAP" id="MF_00289_B">
    <property type="entry name" value="Proteasome_A_B"/>
    <property type="match status" value="1"/>
</dbReference>
<dbReference type="InterPro" id="IPR029055">
    <property type="entry name" value="Ntn_hydrolases_N"/>
</dbReference>
<dbReference type="InterPro" id="IPR023332">
    <property type="entry name" value="Proteasome_alpha-type"/>
</dbReference>
<dbReference type="InterPro" id="IPR022296">
    <property type="entry name" value="Proteasome_asu_bac"/>
</dbReference>
<dbReference type="InterPro" id="IPR001353">
    <property type="entry name" value="Proteasome_sua/b"/>
</dbReference>
<dbReference type="NCBIfam" id="TIGR03691">
    <property type="entry name" value="20S_bact_alpha"/>
    <property type="match status" value="1"/>
</dbReference>
<dbReference type="Pfam" id="PF00227">
    <property type="entry name" value="Proteasome"/>
    <property type="match status" value="1"/>
</dbReference>
<dbReference type="SUPFAM" id="SSF56235">
    <property type="entry name" value="N-terminal nucleophile aminohydrolases (Ntn hydrolases)"/>
    <property type="match status" value="1"/>
</dbReference>
<dbReference type="PROSITE" id="PS51475">
    <property type="entry name" value="PROTEASOME_ALPHA_2"/>
    <property type="match status" value="1"/>
</dbReference>
<sequence length="254" mass="27746">MTMPYYASAEQIMRDRSELARKGIARGRSVVVLTYRDGVLFVAENPSRALHKVSELYDRLGFAAVGKYNEFENLRRAGIVHADMRGYSYDRRDVTGRSLANAYAQTLGTIFTEQPKPYEVEICVAEIGRFGSSTPAQLYRITYDGSIADEQEFVVMGGTTEPIVTAMRESYQRDLDLESAVRLAVGALQKGGPAPAGTTEAEPRTLDVSALEVAVLDSNRPRRAFKRIAGSALEEMLPTPAATEDAPANGDAPS</sequence>
<name>PSA_RHOE4</name>
<reference key="1">
    <citation type="submission" date="2005-03" db="EMBL/GenBank/DDBJ databases">
        <title>Comparison of the complete genome sequences of Rhodococcus erythropolis PR4 and Rhodococcus opacus B4.</title>
        <authorList>
            <person name="Takarada H."/>
            <person name="Sekine M."/>
            <person name="Hosoyama A."/>
            <person name="Yamada R."/>
            <person name="Fujisawa T."/>
            <person name="Omata S."/>
            <person name="Shimizu A."/>
            <person name="Tsukatani N."/>
            <person name="Tanikawa S."/>
            <person name="Fujita N."/>
            <person name="Harayama S."/>
        </authorList>
    </citation>
    <scope>NUCLEOTIDE SEQUENCE [LARGE SCALE GENOMIC DNA]</scope>
    <source>
        <strain>PR4 / NBRC 100887</strain>
    </source>
</reference>
<evidence type="ECO:0000255" key="1">
    <source>
        <dbReference type="HAMAP-Rule" id="MF_00289"/>
    </source>
</evidence>
<evidence type="ECO:0000256" key="2">
    <source>
        <dbReference type="SAM" id="MobiDB-lite"/>
    </source>
</evidence>
<accession>C0ZZU6</accession>
<keyword id="KW-0963">Cytoplasm</keyword>
<keyword id="KW-0647">Proteasome</keyword>
<protein>
    <recommendedName>
        <fullName evidence="1">Proteasome subunit alpha</fullName>
    </recommendedName>
    <alternativeName>
        <fullName evidence="1">20S proteasome alpha subunit</fullName>
    </alternativeName>
    <alternativeName>
        <fullName evidence="1">Proteasome core protein PrcA</fullName>
    </alternativeName>
</protein>
<organism>
    <name type="scientific">Rhodococcus erythropolis (strain PR4 / NBRC 100887)</name>
    <dbReference type="NCBI Taxonomy" id="234621"/>
    <lineage>
        <taxon>Bacteria</taxon>
        <taxon>Bacillati</taxon>
        <taxon>Actinomycetota</taxon>
        <taxon>Actinomycetes</taxon>
        <taxon>Mycobacteriales</taxon>
        <taxon>Nocardiaceae</taxon>
        <taxon>Rhodococcus</taxon>
        <taxon>Rhodococcus erythropolis group</taxon>
    </lineage>
</organism>
<feature type="chain" id="PRO_0000397167" description="Proteasome subunit alpha">
    <location>
        <begin position="1"/>
        <end position="254"/>
    </location>
</feature>
<feature type="region of interest" description="Disordered" evidence="2">
    <location>
        <begin position="234"/>
        <end position="254"/>
    </location>
</feature>
<proteinExistence type="inferred from homology"/>
<gene>
    <name evidence="1" type="primary">prcA</name>
    <name type="ordered locus">RER_31730</name>
</gene>
<comment type="function">
    <text evidence="1">Component of the proteasome core, a large protease complex with broad specificity involved in protein degradation.</text>
</comment>
<comment type="activity regulation">
    <text evidence="1">The formation of the proteasomal ATPase ARC-20S proteasome complex, likely via the docking of the C-termini of ARC into the intersubunit pockets in the alpha-rings, may trigger opening of the gate for substrate entry. Interconversion between the open-gate and close-gate conformations leads to a dynamic regulation of the 20S proteasome proteolysis activity.</text>
</comment>
<comment type="pathway">
    <text evidence="1">Protein degradation; proteasomal Pup-dependent pathway.</text>
</comment>
<comment type="subunit">
    <text evidence="1">The 20S proteasome core is composed of 14 alpha and 14 beta subunits that assemble into four stacked heptameric rings, resulting in a barrel-shaped structure. The two inner rings, each composed of seven catalytic beta subunits, are sandwiched by two outer rings, each composed of seven alpha subunits. The catalytic chamber with the active sites is on the inside of the barrel. Has a gated structure, the ends of the cylinder being occluded by the N-termini of the alpha-subunits. Is capped by the proteasome-associated ATPase, ARC.</text>
</comment>
<comment type="subcellular location">
    <subcellularLocation>
        <location evidence="1">Cytoplasm</location>
    </subcellularLocation>
</comment>
<comment type="similarity">
    <text evidence="1">Belongs to the peptidase T1A family.</text>
</comment>